<sequence>MMRFMLLFSRQGKLRLQKWYLATSDKERKKMVRELMQVVLARKPKMCSFLEWRDLKVVYKRYASLYFCCAIEGQDNELITLELIHRYVELLDKYFGSVCELDIIFNFEKAYFILDEFLMGGDVQDTSKKSVLKAIEQADLLQEEDESPRSVLEEMGLA</sequence>
<gene>
    <name type="primary">Ap1s1</name>
    <name type="synonym">Ap19</name>
</gene>
<dbReference type="EMBL" id="M62418">
    <property type="protein sequence ID" value="AAA37243.1"/>
    <property type="molecule type" value="mRNA"/>
</dbReference>
<dbReference type="EMBL" id="AK002225">
    <property type="protein sequence ID" value="BAB21947.1"/>
    <property type="molecule type" value="mRNA"/>
</dbReference>
<dbReference type="EMBL" id="BC052692">
    <property type="protein sequence ID" value="AAH52692.1"/>
    <property type="molecule type" value="mRNA"/>
</dbReference>
<dbReference type="CCDS" id="CCDS39330.1"/>
<dbReference type="PIR" id="A40535">
    <property type="entry name" value="A40535"/>
</dbReference>
<dbReference type="RefSeq" id="NP_031483.1">
    <property type="nucleotide sequence ID" value="NM_007457.4"/>
</dbReference>
<dbReference type="PDB" id="1W63">
    <property type="method" value="X-ray"/>
    <property type="resolution" value="4.00 A"/>
    <property type="chains" value="Q/S/T/U/W/X=1-158"/>
</dbReference>
<dbReference type="PDBsum" id="1W63"/>
<dbReference type="SMR" id="P61967"/>
<dbReference type="BioGRID" id="198127">
    <property type="interactions" value="6"/>
</dbReference>
<dbReference type="ComplexPortal" id="CPX-5141">
    <property type="entry name" value="Ubiquitous AP-1 Adaptor complex, sigma1a variant"/>
</dbReference>
<dbReference type="ComplexPortal" id="CPX-5144">
    <property type="entry name" value="Endothelial AP-1 Adaptor complex, sigma1a variant"/>
</dbReference>
<dbReference type="CORUM" id="P61967"/>
<dbReference type="FunCoup" id="P61967">
    <property type="interactions" value="2200"/>
</dbReference>
<dbReference type="IntAct" id="P61967">
    <property type="interactions" value="4"/>
</dbReference>
<dbReference type="STRING" id="10090.ENSMUSP00000106709"/>
<dbReference type="iPTMnet" id="P61967"/>
<dbReference type="PhosphoSitePlus" id="P61967"/>
<dbReference type="SwissPalm" id="P61967"/>
<dbReference type="jPOST" id="P61967"/>
<dbReference type="PaxDb" id="10090-ENSMUSP00000106709"/>
<dbReference type="PeptideAtlas" id="P61967"/>
<dbReference type="ProteomicsDB" id="296325"/>
<dbReference type="Pumba" id="P61967"/>
<dbReference type="Antibodypedia" id="30972">
    <property type="antibodies" value="130 antibodies from 20 providers"/>
</dbReference>
<dbReference type="DNASU" id="11769"/>
<dbReference type="Ensembl" id="ENSMUST00000111080.8">
    <property type="protein sequence ID" value="ENSMUSP00000106709.2"/>
    <property type="gene ID" value="ENSMUSG00000004849.15"/>
</dbReference>
<dbReference type="GeneID" id="11769"/>
<dbReference type="KEGG" id="mmu:11769"/>
<dbReference type="UCSC" id="uc009abm.1">
    <property type="organism name" value="mouse"/>
</dbReference>
<dbReference type="AGR" id="MGI:1098244"/>
<dbReference type="CTD" id="1174"/>
<dbReference type="MGI" id="MGI:1098244">
    <property type="gene designation" value="Ap1s1"/>
</dbReference>
<dbReference type="VEuPathDB" id="HostDB:ENSMUSG00000004849"/>
<dbReference type="eggNOG" id="KOG0934">
    <property type="taxonomic scope" value="Eukaryota"/>
</dbReference>
<dbReference type="GeneTree" id="ENSGT00970000193372"/>
<dbReference type="InParanoid" id="P61967"/>
<dbReference type="OMA" id="WYVATSE"/>
<dbReference type="PhylomeDB" id="P61967"/>
<dbReference type="TreeFam" id="TF312921"/>
<dbReference type="Reactome" id="R-MMU-2132295">
    <property type="pathway name" value="MHC class II antigen presentation"/>
</dbReference>
<dbReference type="Reactome" id="R-MMU-432720">
    <property type="pathway name" value="Lysosome Vesicle Biogenesis"/>
</dbReference>
<dbReference type="Reactome" id="R-MMU-432722">
    <property type="pathway name" value="Golgi Associated Vesicle Biogenesis"/>
</dbReference>
<dbReference type="BioGRID-ORCS" id="11769">
    <property type="hits" value="5 hits in 79 CRISPR screens"/>
</dbReference>
<dbReference type="CD-CODE" id="CE726F99">
    <property type="entry name" value="Postsynaptic density"/>
</dbReference>
<dbReference type="ChiTaRS" id="Ap1s1">
    <property type="organism name" value="mouse"/>
</dbReference>
<dbReference type="EvolutionaryTrace" id="P61967"/>
<dbReference type="PRO" id="PR:P61967"/>
<dbReference type="Proteomes" id="UP000000589">
    <property type="component" value="Chromosome 5"/>
</dbReference>
<dbReference type="RNAct" id="P61967">
    <property type="molecule type" value="protein"/>
</dbReference>
<dbReference type="Bgee" id="ENSMUSG00000004849">
    <property type="expression patterns" value="Expressed in dentate gyrus of hippocampal formation granule cell and 258 other cell types or tissues"/>
</dbReference>
<dbReference type="ExpressionAtlas" id="P61967">
    <property type="expression patterns" value="baseline and differential"/>
</dbReference>
<dbReference type="GO" id="GO:0030121">
    <property type="term" value="C:AP-1 adaptor complex"/>
    <property type="evidence" value="ECO:0000303"/>
    <property type="project" value="UniProtKB"/>
</dbReference>
<dbReference type="GO" id="GO:0005905">
    <property type="term" value="C:clathrin-coated pit"/>
    <property type="evidence" value="ECO:0007669"/>
    <property type="project" value="UniProtKB-SubCell"/>
</dbReference>
<dbReference type="GO" id="GO:0005829">
    <property type="term" value="C:cytosol"/>
    <property type="evidence" value="ECO:0007669"/>
    <property type="project" value="GOC"/>
</dbReference>
<dbReference type="GO" id="GO:0005769">
    <property type="term" value="C:early endosome"/>
    <property type="evidence" value="ECO:0000303"/>
    <property type="project" value="ComplexPortal"/>
</dbReference>
<dbReference type="GO" id="GO:0005765">
    <property type="term" value="C:lysosomal membrane"/>
    <property type="evidence" value="ECO:0000303"/>
    <property type="project" value="ComplexPortal"/>
</dbReference>
<dbReference type="GO" id="GO:0098793">
    <property type="term" value="C:presynapse"/>
    <property type="evidence" value="ECO:0000314"/>
    <property type="project" value="SynGO"/>
</dbReference>
<dbReference type="GO" id="GO:0043195">
    <property type="term" value="C:terminal bouton"/>
    <property type="evidence" value="ECO:0000314"/>
    <property type="project" value="MGI"/>
</dbReference>
<dbReference type="GO" id="GO:0005802">
    <property type="term" value="C:trans-Golgi network"/>
    <property type="evidence" value="ECO:0000303"/>
    <property type="project" value="UniProtKB"/>
</dbReference>
<dbReference type="GO" id="GO:0032588">
    <property type="term" value="C:trans-Golgi network membrane"/>
    <property type="evidence" value="ECO:0000303"/>
    <property type="project" value="ComplexPortal"/>
</dbReference>
<dbReference type="GO" id="GO:0035615">
    <property type="term" value="F:clathrin adaptor activity"/>
    <property type="evidence" value="ECO:0007669"/>
    <property type="project" value="InterPro"/>
</dbReference>
<dbReference type="GO" id="GO:0110010">
    <property type="term" value="P:basolateral protein secretion"/>
    <property type="evidence" value="ECO:0000303"/>
    <property type="project" value="ComplexPortal"/>
</dbReference>
<dbReference type="GO" id="GO:0006886">
    <property type="term" value="P:intracellular protein transport"/>
    <property type="evidence" value="ECO:0000303"/>
    <property type="project" value="UniProtKB"/>
</dbReference>
<dbReference type="GO" id="GO:1903232">
    <property type="term" value="P:melanosome assembly"/>
    <property type="evidence" value="ECO:0000303"/>
    <property type="project" value="ComplexPortal"/>
</dbReference>
<dbReference type="GO" id="GO:0060155">
    <property type="term" value="P:platelet dense granule organization"/>
    <property type="evidence" value="ECO:0000303"/>
    <property type="project" value="ComplexPortal"/>
</dbReference>
<dbReference type="GO" id="GO:0009615">
    <property type="term" value="P:response to virus"/>
    <property type="evidence" value="ECO:0007669"/>
    <property type="project" value="Ensembl"/>
</dbReference>
<dbReference type="GO" id="GO:0042147">
    <property type="term" value="P:retrograde transport, endosome to Golgi"/>
    <property type="evidence" value="ECO:0000315"/>
    <property type="project" value="MGI"/>
</dbReference>
<dbReference type="GO" id="GO:0016192">
    <property type="term" value="P:vesicle-mediated transport"/>
    <property type="evidence" value="ECO:0000304"/>
    <property type="project" value="MGI"/>
</dbReference>
<dbReference type="CDD" id="cd14831">
    <property type="entry name" value="AP1_sigma"/>
    <property type="match status" value="1"/>
</dbReference>
<dbReference type="FunFam" id="3.30.450.60:FF:000005">
    <property type="entry name" value="AP complex subunit sigma"/>
    <property type="match status" value="1"/>
</dbReference>
<dbReference type="Gene3D" id="3.30.450.60">
    <property type="match status" value="1"/>
</dbReference>
<dbReference type="InterPro" id="IPR044733">
    <property type="entry name" value="AP1_sigma"/>
</dbReference>
<dbReference type="InterPro" id="IPR016635">
    <property type="entry name" value="AP_complex_ssu"/>
</dbReference>
<dbReference type="InterPro" id="IPR022775">
    <property type="entry name" value="AP_mu_sigma_su"/>
</dbReference>
<dbReference type="InterPro" id="IPR000804">
    <property type="entry name" value="Clathrin_sm-chain_CS"/>
</dbReference>
<dbReference type="InterPro" id="IPR011012">
    <property type="entry name" value="Longin-like_dom_sf"/>
</dbReference>
<dbReference type="PANTHER" id="PTHR11753">
    <property type="entry name" value="ADAPTOR COMPLEXES SMALL SUBUNIT FAMILY"/>
    <property type="match status" value="1"/>
</dbReference>
<dbReference type="Pfam" id="PF01217">
    <property type="entry name" value="Clat_adaptor_s"/>
    <property type="match status" value="1"/>
</dbReference>
<dbReference type="PIRSF" id="PIRSF015588">
    <property type="entry name" value="AP_complex_sigma"/>
    <property type="match status" value="1"/>
</dbReference>
<dbReference type="SUPFAM" id="SSF64356">
    <property type="entry name" value="SNARE-like"/>
    <property type="match status" value="1"/>
</dbReference>
<dbReference type="PROSITE" id="PS00989">
    <property type="entry name" value="CLAT_ADAPTOR_S"/>
    <property type="match status" value="1"/>
</dbReference>
<protein>
    <recommendedName>
        <fullName>AP-1 complex subunit sigma-1A</fullName>
    </recommendedName>
    <alternativeName>
        <fullName>Adaptor protein complex AP-1 subunit sigma-1A</fullName>
    </alternativeName>
    <alternativeName>
        <fullName>Adaptor-related protein complex 1 subunit sigma-1A</fullName>
    </alternativeName>
    <alternativeName>
        <fullName>Clathrin assembly protein complex 1 sigma-1A small chain</fullName>
    </alternativeName>
    <alternativeName>
        <fullName>Clathrin coat assembly protein AP19</fullName>
    </alternativeName>
    <alternativeName>
        <fullName>Golgi adaptor HA1/AP1 adaptin sigma-1A subunit</fullName>
    </alternativeName>
    <alternativeName>
        <fullName>HA1 19 kDa subunit</fullName>
    </alternativeName>
    <alternativeName>
        <fullName>Sigma 1a subunit of AP-1 clathrin</fullName>
    </alternativeName>
    <alternativeName>
        <fullName>Sigma-adaptin 1A</fullName>
    </alternativeName>
    <alternativeName>
        <fullName>Sigma1A-adaptin</fullName>
    </alternativeName>
</protein>
<comment type="function">
    <text>Subunit of clathrin-associated adaptor protein complex 1 that plays a role in protein sorting in the late-Golgi/trans-Golgi network (TGN) and/or endosomes. The AP complexes mediate both the recruitment of clathrin to membranes and the recognition of sorting signals within the cytosolic tails of transmembrane cargo molecules.</text>
</comment>
<comment type="subunit">
    <text>Adaptor protein complex 1 (AP-1) is a heterotetramer composed of two large adaptins (gamma-type subunit AP1G1 and beta-type subunit AP1B1), a medium adaptin (mu-type subunit AP1M1 or AP1M2) and a small adaptin (sigma-type subunit AP1S1 or AP1S2 or AP1S3).</text>
</comment>
<comment type="subcellular location">
    <subcellularLocation>
        <location>Golgi apparatus</location>
    </subcellularLocation>
    <subcellularLocation>
        <location>Cytoplasmic vesicle membrane</location>
        <topology>Peripheral membrane protein</topology>
        <orientation>Cytoplasmic side</orientation>
    </subcellularLocation>
    <subcellularLocation>
        <location>Membrane</location>
        <location>Clathrin-coated pit</location>
    </subcellularLocation>
    <text>Component of the coat surrounding the cytoplasmic face of coated vesicles located at the Golgi complex.</text>
</comment>
<comment type="tissue specificity">
    <text>Detected in brain and embryonic stem cells.</text>
</comment>
<comment type="similarity">
    <text evidence="1">Belongs to the adaptor complexes small subunit family.</text>
</comment>
<proteinExistence type="evidence at protein level"/>
<accession>P61967</accession>
<accession>P82267</accession>
<accession>Q00382</accession>
<accession>Q9BTN4</accession>
<accession>Q9UDW9</accession>
<name>AP1S1_MOUSE</name>
<feature type="chain" id="PRO_0000193798" description="AP-1 complex subunit sigma-1A">
    <location>
        <begin position="1"/>
        <end position="158"/>
    </location>
</feature>
<feature type="modified residue" description="Phosphoserine" evidence="2">
    <location>
        <position position="147"/>
    </location>
</feature>
<keyword id="KW-0002">3D-structure</keyword>
<keyword id="KW-0168">Coated pit</keyword>
<keyword id="KW-0968">Cytoplasmic vesicle</keyword>
<keyword id="KW-0333">Golgi apparatus</keyword>
<keyword id="KW-0472">Membrane</keyword>
<keyword id="KW-0597">Phosphoprotein</keyword>
<keyword id="KW-0653">Protein transport</keyword>
<keyword id="KW-1185">Reference proteome</keyword>
<keyword id="KW-0813">Transport</keyword>
<organism>
    <name type="scientific">Mus musculus</name>
    <name type="common">Mouse</name>
    <dbReference type="NCBI Taxonomy" id="10090"/>
    <lineage>
        <taxon>Eukaryota</taxon>
        <taxon>Metazoa</taxon>
        <taxon>Chordata</taxon>
        <taxon>Craniata</taxon>
        <taxon>Vertebrata</taxon>
        <taxon>Euteleostomi</taxon>
        <taxon>Mammalia</taxon>
        <taxon>Eutheria</taxon>
        <taxon>Euarchontoglires</taxon>
        <taxon>Glires</taxon>
        <taxon>Rodentia</taxon>
        <taxon>Myomorpha</taxon>
        <taxon>Muroidea</taxon>
        <taxon>Muridae</taxon>
        <taxon>Murinae</taxon>
        <taxon>Mus</taxon>
        <taxon>Mus</taxon>
    </lineage>
</organism>
<reference key="1">
    <citation type="journal article" date="1991" name="J. Biol. Chem.">
        <title>AP17 and AP19, the mammalian small chains of the clathrin-associated protein complexes show homology to Yap17p, their putative homolog in yeast.</title>
        <authorList>
            <person name="Kirchhausen T."/>
            <person name="Davis A.C."/>
            <person name="Frucht S."/>
            <person name="O'Brine Greco B."/>
            <person name="Payne G.S."/>
            <person name="Tubb B."/>
        </authorList>
    </citation>
    <scope>NUCLEOTIDE SEQUENCE [MRNA]</scope>
    <source>
        <tissue>Brain</tissue>
    </source>
</reference>
<reference key="2">
    <citation type="journal article" date="2005" name="Science">
        <title>The transcriptional landscape of the mammalian genome.</title>
        <authorList>
            <person name="Carninci P."/>
            <person name="Kasukawa T."/>
            <person name="Katayama S."/>
            <person name="Gough J."/>
            <person name="Frith M.C."/>
            <person name="Maeda N."/>
            <person name="Oyama R."/>
            <person name="Ravasi T."/>
            <person name="Lenhard B."/>
            <person name="Wells C."/>
            <person name="Kodzius R."/>
            <person name="Shimokawa K."/>
            <person name="Bajic V.B."/>
            <person name="Brenner S.E."/>
            <person name="Batalov S."/>
            <person name="Forrest A.R."/>
            <person name="Zavolan M."/>
            <person name="Davis M.J."/>
            <person name="Wilming L.G."/>
            <person name="Aidinis V."/>
            <person name="Allen J.E."/>
            <person name="Ambesi-Impiombato A."/>
            <person name="Apweiler R."/>
            <person name="Aturaliya R.N."/>
            <person name="Bailey T.L."/>
            <person name="Bansal M."/>
            <person name="Baxter L."/>
            <person name="Beisel K.W."/>
            <person name="Bersano T."/>
            <person name="Bono H."/>
            <person name="Chalk A.M."/>
            <person name="Chiu K.P."/>
            <person name="Choudhary V."/>
            <person name="Christoffels A."/>
            <person name="Clutterbuck D.R."/>
            <person name="Crowe M.L."/>
            <person name="Dalla E."/>
            <person name="Dalrymple B.P."/>
            <person name="de Bono B."/>
            <person name="Della Gatta G."/>
            <person name="di Bernardo D."/>
            <person name="Down T."/>
            <person name="Engstrom P."/>
            <person name="Fagiolini M."/>
            <person name="Faulkner G."/>
            <person name="Fletcher C.F."/>
            <person name="Fukushima T."/>
            <person name="Furuno M."/>
            <person name="Futaki S."/>
            <person name="Gariboldi M."/>
            <person name="Georgii-Hemming P."/>
            <person name="Gingeras T.R."/>
            <person name="Gojobori T."/>
            <person name="Green R.E."/>
            <person name="Gustincich S."/>
            <person name="Harbers M."/>
            <person name="Hayashi Y."/>
            <person name="Hensch T.K."/>
            <person name="Hirokawa N."/>
            <person name="Hill D."/>
            <person name="Huminiecki L."/>
            <person name="Iacono M."/>
            <person name="Ikeo K."/>
            <person name="Iwama A."/>
            <person name="Ishikawa T."/>
            <person name="Jakt M."/>
            <person name="Kanapin A."/>
            <person name="Katoh M."/>
            <person name="Kawasawa Y."/>
            <person name="Kelso J."/>
            <person name="Kitamura H."/>
            <person name="Kitano H."/>
            <person name="Kollias G."/>
            <person name="Krishnan S.P."/>
            <person name="Kruger A."/>
            <person name="Kummerfeld S.K."/>
            <person name="Kurochkin I.V."/>
            <person name="Lareau L.F."/>
            <person name="Lazarevic D."/>
            <person name="Lipovich L."/>
            <person name="Liu J."/>
            <person name="Liuni S."/>
            <person name="McWilliam S."/>
            <person name="Madan Babu M."/>
            <person name="Madera M."/>
            <person name="Marchionni L."/>
            <person name="Matsuda H."/>
            <person name="Matsuzawa S."/>
            <person name="Miki H."/>
            <person name="Mignone F."/>
            <person name="Miyake S."/>
            <person name="Morris K."/>
            <person name="Mottagui-Tabar S."/>
            <person name="Mulder N."/>
            <person name="Nakano N."/>
            <person name="Nakauchi H."/>
            <person name="Ng P."/>
            <person name="Nilsson R."/>
            <person name="Nishiguchi S."/>
            <person name="Nishikawa S."/>
            <person name="Nori F."/>
            <person name="Ohara O."/>
            <person name="Okazaki Y."/>
            <person name="Orlando V."/>
            <person name="Pang K.C."/>
            <person name="Pavan W.J."/>
            <person name="Pavesi G."/>
            <person name="Pesole G."/>
            <person name="Petrovsky N."/>
            <person name="Piazza S."/>
            <person name="Reed J."/>
            <person name="Reid J.F."/>
            <person name="Ring B.Z."/>
            <person name="Ringwald M."/>
            <person name="Rost B."/>
            <person name="Ruan Y."/>
            <person name="Salzberg S.L."/>
            <person name="Sandelin A."/>
            <person name="Schneider C."/>
            <person name="Schoenbach C."/>
            <person name="Sekiguchi K."/>
            <person name="Semple C.A."/>
            <person name="Seno S."/>
            <person name="Sessa L."/>
            <person name="Sheng Y."/>
            <person name="Shibata Y."/>
            <person name="Shimada H."/>
            <person name="Shimada K."/>
            <person name="Silva D."/>
            <person name="Sinclair B."/>
            <person name="Sperling S."/>
            <person name="Stupka E."/>
            <person name="Sugiura K."/>
            <person name="Sultana R."/>
            <person name="Takenaka Y."/>
            <person name="Taki K."/>
            <person name="Tammoja K."/>
            <person name="Tan S.L."/>
            <person name="Tang S."/>
            <person name="Taylor M.S."/>
            <person name="Tegner J."/>
            <person name="Teichmann S.A."/>
            <person name="Ueda H.R."/>
            <person name="van Nimwegen E."/>
            <person name="Verardo R."/>
            <person name="Wei C.L."/>
            <person name="Yagi K."/>
            <person name="Yamanishi H."/>
            <person name="Zabarovsky E."/>
            <person name="Zhu S."/>
            <person name="Zimmer A."/>
            <person name="Hide W."/>
            <person name="Bult C."/>
            <person name="Grimmond S.M."/>
            <person name="Teasdale R.D."/>
            <person name="Liu E.T."/>
            <person name="Brusic V."/>
            <person name="Quackenbush J."/>
            <person name="Wahlestedt C."/>
            <person name="Mattick J.S."/>
            <person name="Hume D.A."/>
            <person name="Kai C."/>
            <person name="Sasaki D."/>
            <person name="Tomaru Y."/>
            <person name="Fukuda S."/>
            <person name="Kanamori-Katayama M."/>
            <person name="Suzuki M."/>
            <person name="Aoki J."/>
            <person name="Arakawa T."/>
            <person name="Iida J."/>
            <person name="Imamura K."/>
            <person name="Itoh M."/>
            <person name="Kato T."/>
            <person name="Kawaji H."/>
            <person name="Kawagashira N."/>
            <person name="Kawashima T."/>
            <person name="Kojima M."/>
            <person name="Kondo S."/>
            <person name="Konno H."/>
            <person name="Nakano K."/>
            <person name="Ninomiya N."/>
            <person name="Nishio T."/>
            <person name="Okada M."/>
            <person name="Plessy C."/>
            <person name="Shibata K."/>
            <person name="Shiraki T."/>
            <person name="Suzuki S."/>
            <person name="Tagami M."/>
            <person name="Waki K."/>
            <person name="Watahiki A."/>
            <person name="Okamura-Oho Y."/>
            <person name="Suzuki H."/>
            <person name="Kawai J."/>
            <person name="Hayashizaki Y."/>
        </authorList>
    </citation>
    <scope>NUCLEOTIDE SEQUENCE [LARGE SCALE MRNA]</scope>
    <source>
        <strain>C57BL/6J</strain>
        <tissue>Embryonic stem cell</tissue>
    </source>
</reference>
<reference key="3">
    <citation type="journal article" date="2004" name="Genome Res.">
        <title>The status, quality, and expansion of the NIH full-length cDNA project: the Mammalian Gene Collection (MGC).</title>
        <authorList>
            <consortium name="The MGC Project Team"/>
        </authorList>
    </citation>
    <scope>NUCLEOTIDE SEQUENCE [LARGE SCALE MRNA]</scope>
    <source>
        <strain>C57BL/6J</strain>
    </source>
</reference>
<reference key="4">
    <citation type="journal article" date="2007" name="Mol. Cell. Proteomics">
        <title>Qualitative and quantitative analyses of protein phosphorylation in naive and stimulated mouse synaptosomal preparations.</title>
        <authorList>
            <person name="Munton R.P."/>
            <person name="Tweedie-Cullen R."/>
            <person name="Livingstone-Zatchej M."/>
            <person name="Weinandy F."/>
            <person name="Waidelich M."/>
            <person name="Longo D."/>
            <person name="Gehrig P."/>
            <person name="Potthast F."/>
            <person name="Rutishauser D."/>
            <person name="Gerrits B."/>
            <person name="Panse C."/>
            <person name="Schlapbach R."/>
            <person name="Mansuy I.M."/>
        </authorList>
    </citation>
    <scope>IDENTIFICATION BY MASS SPECTROMETRY [LARGE SCALE ANALYSIS]</scope>
    <source>
        <tissue>Brain cortex</tissue>
    </source>
</reference>
<reference key="5">
    <citation type="journal article" date="2010" name="Cell">
        <title>A tissue-specific atlas of mouse protein phosphorylation and expression.</title>
        <authorList>
            <person name="Huttlin E.L."/>
            <person name="Jedrychowski M.P."/>
            <person name="Elias J.E."/>
            <person name="Goswami T."/>
            <person name="Rad R."/>
            <person name="Beausoleil S.A."/>
            <person name="Villen J."/>
            <person name="Haas W."/>
            <person name="Sowa M.E."/>
            <person name="Gygi S.P."/>
        </authorList>
    </citation>
    <scope>PHOSPHORYLATION [LARGE SCALE ANALYSIS] AT SER-147</scope>
    <scope>IDENTIFICATION BY MASS SPECTROMETRY [LARGE SCALE ANALYSIS]</scope>
    <source>
        <tissue>Brain</tissue>
        <tissue>Brown adipose tissue</tissue>
        <tissue>Heart</tissue>
        <tissue>Kidney</tissue>
        <tissue>Liver</tissue>
        <tissue>Lung</tissue>
        <tissue>Pancreas</tissue>
        <tissue>Spleen</tissue>
        <tissue>Testis</tissue>
    </source>
</reference>
<evidence type="ECO:0000305" key="1"/>
<evidence type="ECO:0007744" key="2">
    <source>
    </source>
</evidence>